<reference key="1">
    <citation type="journal article" date="2005" name="Nucleic Acids Res.">
        <title>The genome sequence of Xanthomonas oryzae pathovar oryzae KACC10331, the bacterial blight pathogen of rice.</title>
        <authorList>
            <person name="Lee B.-M."/>
            <person name="Park Y.-J."/>
            <person name="Park D.-S."/>
            <person name="Kang H.-W."/>
            <person name="Kim J.-G."/>
            <person name="Song E.-S."/>
            <person name="Park I.-C."/>
            <person name="Yoon U.-H."/>
            <person name="Hahn J.-H."/>
            <person name="Koo B.-S."/>
            <person name="Lee G.-B."/>
            <person name="Kim H."/>
            <person name="Park H.-S."/>
            <person name="Yoon K.-O."/>
            <person name="Kim J.-H."/>
            <person name="Jung C.-H."/>
            <person name="Koh N.-H."/>
            <person name="Seo J.-S."/>
            <person name="Go S.-J."/>
        </authorList>
    </citation>
    <scope>NUCLEOTIDE SEQUENCE [LARGE SCALE GENOMIC DNA]</scope>
    <source>
        <strain>KACC10331 / KXO85</strain>
    </source>
</reference>
<gene>
    <name evidence="1" type="primary">xylA1</name>
    <name type="ordered locus">XOO2910</name>
</gene>
<sequence>MSNTVYIGAKEYFPGIGKIGFEGRESDNPLAFKVYDANKTIGDKTMAEHLRFAVAYWHSFCGNGADPFGPGTRAYPWDVGNSALARAEAKSDAAFEFFTKLGVPYYCFHDIDLSPDADDIGEYESNLKHMVGVAKQRQADTGIKLLWGTANLFSHPRYMNGASTNPDFNVVARAAVQVKAAIDATVELGGENYVFWGGREGYACLHNTQMKREQDNMARFLTLARDYGRSIGFTGNFLIEPKPMEPMKHQYDFDSATVIGFLRQHGLDQDFKLNIEANHATLSGHSFEHDLQVASDAGLLGSIDANRGNPQNGWDTDQFPTDLYDTVGAMLVVLRQGGLAPGGLNFDAKVRRESSDPQDLFLAHIGGMDAFARGLEVANALLTSSPLEQWRAERYASFDNGTGADFAAGKITLADLAAHAAGNAPKQISGRQEAYENLINQYLTR</sequence>
<feature type="chain" id="PRO_0000236978" description="Xylose isomerase 1">
    <location>
        <begin position="1"/>
        <end position="445"/>
    </location>
</feature>
<feature type="active site" evidence="1">
    <location>
        <position position="109"/>
    </location>
</feature>
<feature type="active site" evidence="1">
    <location>
        <position position="112"/>
    </location>
</feature>
<feature type="binding site" evidence="1">
    <location>
        <position position="240"/>
    </location>
    <ligand>
        <name>Mg(2+)</name>
        <dbReference type="ChEBI" id="CHEBI:18420"/>
        <label>1</label>
    </ligand>
</feature>
<feature type="binding site" evidence="1">
    <location>
        <position position="276"/>
    </location>
    <ligand>
        <name>Mg(2+)</name>
        <dbReference type="ChEBI" id="CHEBI:18420"/>
        <label>1</label>
    </ligand>
</feature>
<feature type="binding site" evidence="1">
    <location>
        <position position="276"/>
    </location>
    <ligand>
        <name>Mg(2+)</name>
        <dbReference type="ChEBI" id="CHEBI:18420"/>
        <label>2</label>
    </ligand>
</feature>
<feature type="binding site" evidence="1">
    <location>
        <position position="279"/>
    </location>
    <ligand>
        <name>Mg(2+)</name>
        <dbReference type="ChEBI" id="CHEBI:18420"/>
        <label>2</label>
    </ligand>
</feature>
<feature type="binding site" evidence="1">
    <location>
        <position position="304"/>
    </location>
    <ligand>
        <name>Mg(2+)</name>
        <dbReference type="ChEBI" id="CHEBI:18420"/>
        <label>1</label>
    </ligand>
</feature>
<feature type="binding site" evidence="1">
    <location>
        <position position="315"/>
    </location>
    <ligand>
        <name>Mg(2+)</name>
        <dbReference type="ChEBI" id="CHEBI:18420"/>
        <label>2</label>
    </ligand>
</feature>
<feature type="binding site" evidence="1">
    <location>
        <position position="317"/>
    </location>
    <ligand>
        <name>Mg(2+)</name>
        <dbReference type="ChEBI" id="CHEBI:18420"/>
        <label>2</label>
    </ligand>
</feature>
<feature type="binding site" evidence="1">
    <location>
        <position position="347"/>
    </location>
    <ligand>
        <name>Mg(2+)</name>
        <dbReference type="ChEBI" id="CHEBI:18420"/>
        <label>1</label>
    </ligand>
</feature>
<proteinExistence type="inferred from homology"/>
<evidence type="ECO:0000255" key="1">
    <source>
        <dbReference type="HAMAP-Rule" id="MF_00455"/>
    </source>
</evidence>
<keyword id="KW-0119">Carbohydrate metabolism</keyword>
<keyword id="KW-0963">Cytoplasm</keyword>
<keyword id="KW-0413">Isomerase</keyword>
<keyword id="KW-0460">Magnesium</keyword>
<keyword id="KW-0479">Metal-binding</keyword>
<keyword id="KW-1185">Reference proteome</keyword>
<keyword id="KW-0859">Xylose metabolism</keyword>
<name>XYLA1_XANOR</name>
<dbReference type="EC" id="5.3.1.5" evidence="1"/>
<dbReference type="EMBL" id="AE013598">
    <property type="protein sequence ID" value="AAW76164.1"/>
    <property type="molecule type" value="Genomic_DNA"/>
</dbReference>
<dbReference type="SMR" id="Q5GYQ7"/>
<dbReference type="STRING" id="291331.XOO2910"/>
<dbReference type="KEGG" id="xoo:XOO2910"/>
<dbReference type="HOGENOM" id="CLU_037261_1_0_6"/>
<dbReference type="Proteomes" id="UP000006735">
    <property type="component" value="Chromosome"/>
</dbReference>
<dbReference type="GO" id="GO:0005737">
    <property type="term" value="C:cytoplasm"/>
    <property type="evidence" value="ECO:0007669"/>
    <property type="project" value="UniProtKB-SubCell"/>
</dbReference>
<dbReference type="GO" id="GO:0000287">
    <property type="term" value="F:magnesium ion binding"/>
    <property type="evidence" value="ECO:0007669"/>
    <property type="project" value="UniProtKB-UniRule"/>
</dbReference>
<dbReference type="GO" id="GO:0009045">
    <property type="term" value="F:xylose isomerase activity"/>
    <property type="evidence" value="ECO:0007669"/>
    <property type="project" value="UniProtKB-UniRule"/>
</dbReference>
<dbReference type="GO" id="GO:0042732">
    <property type="term" value="P:D-xylose metabolic process"/>
    <property type="evidence" value="ECO:0007669"/>
    <property type="project" value="UniProtKB-UniRule"/>
</dbReference>
<dbReference type="FunFam" id="3.20.20.150:FF:000002">
    <property type="entry name" value="Xylose isomerase"/>
    <property type="match status" value="1"/>
</dbReference>
<dbReference type="Gene3D" id="3.20.20.150">
    <property type="entry name" value="Divalent-metal-dependent TIM barrel enzymes"/>
    <property type="match status" value="1"/>
</dbReference>
<dbReference type="HAMAP" id="MF_00455">
    <property type="entry name" value="Xylose_isom_A"/>
    <property type="match status" value="1"/>
</dbReference>
<dbReference type="InterPro" id="IPR036237">
    <property type="entry name" value="Xyl_isomerase-like_sf"/>
</dbReference>
<dbReference type="InterPro" id="IPR013452">
    <property type="entry name" value="Xylose_isom_bac"/>
</dbReference>
<dbReference type="InterPro" id="IPR001998">
    <property type="entry name" value="Xylose_isomerase"/>
</dbReference>
<dbReference type="NCBIfam" id="NF003998">
    <property type="entry name" value="PRK05474.1"/>
    <property type="match status" value="1"/>
</dbReference>
<dbReference type="NCBIfam" id="NF009115">
    <property type="entry name" value="PRK12465.1"/>
    <property type="match status" value="1"/>
</dbReference>
<dbReference type="NCBIfam" id="TIGR02630">
    <property type="entry name" value="xylose_isom_A"/>
    <property type="match status" value="1"/>
</dbReference>
<dbReference type="PANTHER" id="PTHR48408">
    <property type="match status" value="1"/>
</dbReference>
<dbReference type="PANTHER" id="PTHR48408:SF1">
    <property type="entry name" value="XYLOSE ISOMERASE"/>
    <property type="match status" value="1"/>
</dbReference>
<dbReference type="PRINTS" id="PR00688">
    <property type="entry name" value="XYLOSISMRASE"/>
</dbReference>
<dbReference type="SUPFAM" id="SSF51658">
    <property type="entry name" value="Xylose isomerase-like"/>
    <property type="match status" value="1"/>
</dbReference>
<dbReference type="PROSITE" id="PS51415">
    <property type="entry name" value="XYLOSE_ISOMERASE"/>
    <property type="match status" value="1"/>
</dbReference>
<protein>
    <recommendedName>
        <fullName evidence="1">Xylose isomerase 1</fullName>
        <ecNumber evidence="1">5.3.1.5</ecNumber>
    </recommendedName>
</protein>
<organism>
    <name type="scientific">Xanthomonas oryzae pv. oryzae (strain KACC10331 / KXO85)</name>
    <dbReference type="NCBI Taxonomy" id="291331"/>
    <lineage>
        <taxon>Bacteria</taxon>
        <taxon>Pseudomonadati</taxon>
        <taxon>Pseudomonadota</taxon>
        <taxon>Gammaproteobacteria</taxon>
        <taxon>Lysobacterales</taxon>
        <taxon>Lysobacteraceae</taxon>
        <taxon>Xanthomonas</taxon>
    </lineage>
</organism>
<comment type="catalytic activity">
    <reaction evidence="1">
        <text>alpha-D-xylose = alpha-D-xylulofuranose</text>
        <dbReference type="Rhea" id="RHEA:22816"/>
        <dbReference type="ChEBI" id="CHEBI:28518"/>
        <dbReference type="ChEBI" id="CHEBI:188998"/>
        <dbReference type="EC" id="5.3.1.5"/>
    </reaction>
</comment>
<comment type="cofactor">
    <cofactor evidence="1">
        <name>Mg(2+)</name>
        <dbReference type="ChEBI" id="CHEBI:18420"/>
    </cofactor>
    <text evidence="1">Binds 2 magnesium ions per subunit.</text>
</comment>
<comment type="subunit">
    <text evidence="1">Homotetramer.</text>
</comment>
<comment type="subcellular location">
    <subcellularLocation>
        <location evidence="1">Cytoplasm</location>
    </subcellularLocation>
</comment>
<comment type="similarity">
    <text evidence="1">Belongs to the xylose isomerase family.</text>
</comment>
<accession>Q5GYQ7</accession>